<reference key="1">
    <citation type="journal article" date="2013" name="Nature">
        <title>The zebrafish reference genome sequence and its relationship to the human genome.</title>
        <authorList>
            <person name="Howe K."/>
            <person name="Clark M.D."/>
            <person name="Torroja C.F."/>
            <person name="Torrance J."/>
            <person name="Berthelot C."/>
            <person name="Muffato M."/>
            <person name="Collins J.E."/>
            <person name="Humphray S."/>
            <person name="McLaren K."/>
            <person name="Matthews L."/>
            <person name="McLaren S."/>
            <person name="Sealy I."/>
            <person name="Caccamo M."/>
            <person name="Churcher C."/>
            <person name="Scott C."/>
            <person name="Barrett J.C."/>
            <person name="Koch R."/>
            <person name="Rauch G.J."/>
            <person name="White S."/>
            <person name="Chow W."/>
            <person name="Kilian B."/>
            <person name="Quintais L.T."/>
            <person name="Guerra-Assuncao J.A."/>
            <person name="Zhou Y."/>
            <person name="Gu Y."/>
            <person name="Yen J."/>
            <person name="Vogel J.H."/>
            <person name="Eyre T."/>
            <person name="Redmond S."/>
            <person name="Banerjee R."/>
            <person name="Chi J."/>
            <person name="Fu B."/>
            <person name="Langley E."/>
            <person name="Maguire S.F."/>
            <person name="Laird G.K."/>
            <person name="Lloyd D."/>
            <person name="Kenyon E."/>
            <person name="Donaldson S."/>
            <person name="Sehra H."/>
            <person name="Almeida-King J."/>
            <person name="Loveland J."/>
            <person name="Trevanion S."/>
            <person name="Jones M."/>
            <person name="Quail M."/>
            <person name="Willey D."/>
            <person name="Hunt A."/>
            <person name="Burton J."/>
            <person name="Sims S."/>
            <person name="McLay K."/>
            <person name="Plumb B."/>
            <person name="Davis J."/>
            <person name="Clee C."/>
            <person name="Oliver K."/>
            <person name="Clark R."/>
            <person name="Riddle C."/>
            <person name="Elliot D."/>
            <person name="Threadgold G."/>
            <person name="Harden G."/>
            <person name="Ware D."/>
            <person name="Begum S."/>
            <person name="Mortimore B."/>
            <person name="Kerry G."/>
            <person name="Heath P."/>
            <person name="Phillimore B."/>
            <person name="Tracey A."/>
            <person name="Corby N."/>
            <person name="Dunn M."/>
            <person name="Johnson C."/>
            <person name="Wood J."/>
            <person name="Clark S."/>
            <person name="Pelan S."/>
            <person name="Griffiths G."/>
            <person name="Smith M."/>
            <person name="Glithero R."/>
            <person name="Howden P."/>
            <person name="Barker N."/>
            <person name="Lloyd C."/>
            <person name="Stevens C."/>
            <person name="Harley J."/>
            <person name="Holt K."/>
            <person name="Panagiotidis G."/>
            <person name="Lovell J."/>
            <person name="Beasley H."/>
            <person name="Henderson C."/>
            <person name="Gordon D."/>
            <person name="Auger K."/>
            <person name="Wright D."/>
            <person name="Collins J."/>
            <person name="Raisen C."/>
            <person name="Dyer L."/>
            <person name="Leung K."/>
            <person name="Robertson L."/>
            <person name="Ambridge K."/>
            <person name="Leongamornlert D."/>
            <person name="McGuire S."/>
            <person name="Gilderthorp R."/>
            <person name="Griffiths C."/>
            <person name="Manthravadi D."/>
            <person name="Nichol S."/>
            <person name="Barker G."/>
            <person name="Whitehead S."/>
            <person name="Kay M."/>
            <person name="Brown J."/>
            <person name="Murnane C."/>
            <person name="Gray E."/>
            <person name="Humphries M."/>
            <person name="Sycamore N."/>
            <person name="Barker D."/>
            <person name="Saunders D."/>
            <person name="Wallis J."/>
            <person name="Babbage A."/>
            <person name="Hammond S."/>
            <person name="Mashreghi-Mohammadi M."/>
            <person name="Barr L."/>
            <person name="Martin S."/>
            <person name="Wray P."/>
            <person name="Ellington A."/>
            <person name="Matthews N."/>
            <person name="Ellwood M."/>
            <person name="Woodmansey R."/>
            <person name="Clark G."/>
            <person name="Cooper J."/>
            <person name="Tromans A."/>
            <person name="Grafham D."/>
            <person name="Skuce C."/>
            <person name="Pandian R."/>
            <person name="Andrews R."/>
            <person name="Harrison E."/>
            <person name="Kimberley A."/>
            <person name="Garnett J."/>
            <person name="Fosker N."/>
            <person name="Hall R."/>
            <person name="Garner P."/>
            <person name="Kelly D."/>
            <person name="Bird C."/>
            <person name="Palmer S."/>
            <person name="Gehring I."/>
            <person name="Berger A."/>
            <person name="Dooley C.M."/>
            <person name="Ersan-Urun Z."/>
            <person name="Eser C."/>
            <person name="Geiger H."/>
            <person name="Geisler M."/>
            <person name="Karotki L."/>
            <person name="Kirn A."/>
            <person name="Konantz J."/>
            <person name="Konantz M."/>
            <person name="Oberlander M."/>
            <person name="Rudolph-Geiger S."/>
            <person name="Teucke M."/>
            <person name="Lanz C."/>
            <person name="Raddatz G."/>
            <person name="Osoegawa K."/>
            <person name="Zhu B."/>
            <person name="Rapp A."/>
            <person name="Widaa S."/>
            <person name="Langford C."/>
            <person name="Yang F."/>
            <person name="Schuster S.C."/>
            <person name="Carter N.P."/>
            <person name="Harrow J."/>
            <person name="Ning Z."/>
            <person name="Herrero J."/>
            <person name="Searle S.M."/>
            <person name="Enright A."/>
            <person name="Geisler R."/>
            <person name="Plasterk R.H."/>
            <person name="Lee C."/>
            <person name="Westerfield M."/>
            <person name="de Jong P.J."/>
            <person name="Zon L.I."/>
            <person name="Postlethwait J.H."/>
            <person name="Nusslein-Volhard C."/>
            <person name="Hubbard T.J."/>
            <person name="Roest Crollius H."/>
            <person name="Rogers J."/>
            <person name="Stemple D.L."/>
        </authorList>
    </citation>
    <scope>NUCLEOTIDE SEQUENCE [LARGE SCALE GENOMIC DNA]</scope>
    <source>
        <strain>Tuebingen</strain>
    </source>
</reference>
<organism>
    <name type="scientific">Danio rerio</name>
    <name type="common">Zebrafish</name>
    <name type="synonym">Brachydanio rerio</name>
    <dbReference type="NCBI Taxonomy" id="7955"/>
    <lineage>
        <taxon>Eukaryota</taxon>
        <taxon>Metazoa</taxon>
        <taxon>Chordata</taxon>
        <taxon>Craniata</taxon>
        <taxon>Vertebrata</taxon>
        <taxon>Euteleostomi</taxon>
        <taxon>Actinopterygii</taxon>
        <taxon>Neopterygii</taxon>
        <taxon>Teleostei</taxon>
        <taxon>Ostariophysi</taxon>
        <taxon>Cypriniformes</taxon>
        <taxon>Danionidae</taxon>
        <taxon>Danioninae</taxon>
        <taxon>Danio</taxon>
    </lineage>
</organism>
<dbReference type="EC" id="1.1.1.205" evidence="1"/>
<dbReference type="EMBL" id="CR382331">
    <property type="protein sequence ID" value="CAQ13978.1"/>
    <property type="molecule type" value="Genomic_DNA"/>
</dbReference>
<dbReference type="SMR" id="B0UXP9"/>
<dbReference type="FunCoup" id="B0UXP9">
    <property type="interactions" value="1973"/>
</dbReference>
<dbReference type="STRING" id="7955.ENSDARP00000024354"/>
<dbReference type="PaxDb" id="7955-ENSDARP00000024354"/>
<dbReference type="PeptideAtlas" id="B0UXP9"/>
<dbReference type="Ensembl" id="ENSDART00000009178">
    <property type="protein sequence ID" value="ENSDARP00000024354"/>
    <property type="gene ID" value="ENSDARG00000006900"/>
</dbReference>
<dbReference type="AGR" id="ZFIN:ZDB-GENE-030114-5"/>
<dbReference type="ZFIN" id="ZDB-GENE-030114-5">
    <property type="gene designation" value="impdh2"/>
</dbReference>
<dbReference type="eggNOG" id="KOG2550">
    <property type="taxonomic scope" value="Eukaryota"/>
</dbReference>
<dbReference type="HOGENOM" id="CLU_022552_2_1_1"/>
<dbReference type="InParanoid" id="B0UXP9"/>
<dbReference type="OMA" id="PGSHCTT"/>
<dbReference type="PhylomeDB" id="B0UXP9"/>
<dbReference type="TreeFam" id="TF300378"/>
<dbReference type="Reactome" id="R-DRE-6798695">
    <property type="pathway name" value="Neutrophil degranulation"/>
</dbReference>
<dbReference type="Reactome" id="R-DRE-73817">
    <property type="pathway name" value="Purine ribonucleoside monophosphate biosynthesis"/>
</dbReference>
<dbReference type="Reactome" id="R-DRE-9748787">
    <property type="pathway name" value="Azathioprine ADME"/>
</dbReference>
<dbReference type="UniPathway" id="UPA00601">
    <property type="reaction ID" value="UER00295"/>
</dbReference>
<dbReference type="PRO" id="PR:B0UXP9"/>
<dbReference type="Proteomes" id="UP000000437">
    <property type="component" value="Unplaced"/>
</dbReference>
<dbReference type="Bgee" id="ENSDARG00000006900">
    <property type="expression patterns" value="Expressed in spleen and 44 other cell types or tissues"/>
</dbReference>
<dbReference type="GO" id="GO:0005737">
    <property type="term" value="C:cytoplasm"/>
    <property type="evidence" value="ECO:0000318"/>
    <property type="project" value="GO_Central"/>
</dbReference>
<dbReference type="GO" id="GO:0005829">
    <property type="term" value="C:cytosol"/>
    <property type="evidence" value="ECO:0000250"/>
    <property type="project" value="UniProtKB"/>
</dbReference>
<dbReference type="GO" id="GO:0005634">
    <property type="term" value="C:nucleus"/>
    <property type="evidence" value="ECO:0007669"/>
    <property type="project" value="UniProtKB-SubCell"/>
</dbReference>
<dbReference type="GO" id="GO:0003938">
    <property type="term" value="F:IMP dehydrogenase activity"/>
    <property type="evidence" value="ECO:0000250"/>
    <property type="project" value="UniProtKB"/>
</dbReference>
<dbReference type="GO" id="GO:0046872">
    <property type="term" value="F:metal ion binding"/>
    <property type="evidence" value="ECO:0007669"/>
    <property type="project" value="UniProtKB-UniRule"/>
</dbReference>
<dbReference type="GO" id="GO:0000166">
    <property type="term" value="F:nucleotide binding"/>
    <property type="evidence" value="ECO:0007669"/>
    <property type="project" value="UniProtKB-UniRule"/>
</dbReference>
<dbReference type="GO" id="GO:0007623">
    <property type="term" value="P:circadian rhythm"/>
    <property type="evidence" value="ECO:0000315"/>
    <property type="project" value="ZFIN"/>
</dbReference>
<dbReference type="GO" id="GO:0006177">
    <property type="term" value="P:GMP biosynthetic process"/>
    <property type="evidence" value="ECO:0007669"/>
    <property type="project" value="UniProtKB-UniRule"/>
</dbReference>
<dbReference type="GO" id="GO:0006183">
    <property type="term" value="P:GTP biosynthetic process"/>
    <property type="evidence" value="ECO:0000250"/>
    <property type="project" value="UniProtKB"/>
</dbReference>
<dbReference type="CDD" id="cd04601">
    <property type="entry name" value="CBS_pair_IMPDH"/>
    <property type="match status" value="1"/>
</dbReference>
<dbReference type="CDD" id="cd00381">
    <property type="entry name" value="IMPDH"/>
    <property type="match status" value="1"/>
</dbReference>
<dbReference type="FunFam" id="3.20.20.70:FF:000007">
    <property type="entry name" value="Chromosome 19 SCAF14664, whole genome shotgun sequence"/>
    <property type="match status" value="1"/>
</dbReference>
<dbReference type="Gene3D" id="3.20.20.70">
    <property type="entry name" value="Aldolase class I"/>
    <property type="match status" value="1"/>
</dbReference>
<dbReference type="HAMAP" id="MF_01964">
    <property type="entry name" value="IMPDH"/>
    <property type="match status" value="1"/>
</dbReference>
<dbReference type="InterPro" id="IPR013785">
    <property type="entry name" value="Aldolase_TIM"/>
</dbReference>
<dbReference type="InterPro" id="IPR000644">
    <property type="entry name" value="CBS_dom"/>
</dbReference>
<dbReference type="InterPro" id="IPR005990">
    <property type="entry name" value="IMP_DH"/>
</dbReference>
<dbReference type="InterPro" id="IPR015875">
    <property type="entry name" value="IMP_DH/GMP_Rdtase_CS"/>
</dbReference>
<dbReference type="InterPro" id="IPR001093">
    <property type="entry name" value="IMP_DH_GMPRt"/>
</dbReference>
<dbReference type="NCBIfam" id="TIGR01302">
    <property type="entry name" value="IMP_dehydrog"/>
    <property type="match status" value="1"/>
</dbReference>
<dbReference type="PANTHER" id="PTHR11911:SF121">
    <property type="entry name" value="INOSINE-5'-MONOPHOSPHATE DEHYDROGENASE 2"/>
    <property type="match status" value="1"/>
</dbReference>
<dbReference type="PANTHER" id="PTHR11911">
    <property type="entry name" value="INOSINE-5-MONOPHOSPHATE DEHYDROGENASE RELATED"/>
    <property type="match status" value="1"/>
</dbReference>
<dbReference type="Pfam" id="PF00571">
    <property type="entry name" value="CBS"/>
    <property type="match status" value="2"/>
</dbReference>
<dbReference type="Pfam" id="PF00478">
    <property type="entry name" value="IMPDH"/>
    <property type="match status" value="1"/>
</dbReference>
<dbReference type="PIRSF" id="PIRSF000130">
    <property type="entry name" value="IMPDH"/>
    <property type="match status" value="1"/>
</dbReference>
<dbReference type="SMART" id="SM00116">
    <property type="entry name" value="CBS"/>
    <property type="match status" value="2"/>
</dbReference>
<dbReference type="SMART" id="SM01240">
    <property type="entry name" value="IMPDH"/>
    <property type="match status" value="1"/>
</dbReference>
<dbReference type="SUPFAM" id="SSF51412">
    <property type="entry name" value="Inosine monophosphate dehydrogenase (IMPDH)"/>
    <property type="match status" value="2"/>
</dbReference>
<dbReference type="PROSITE" id="PS51371">
    <property type="entry name" value="CBS"/>
    <property type="match status" value="2"/>
</dbReference>
<dbReference type="PROSITE" id="PS00487">
    <property type="entry name" value="IMP_DH_GMP_RED"/>
    <property type="match status" value="1"/>
</dbReference>
<feature type="chain" id="PRO_0000415676" description="Inosine-5'-monophosphate dehydrogenase 2">
    <location>
        <begin position="1"/>
        <end position="514"/>
    </location>
</feature>
<feature type="domain" description="CBS 1" evidence="2">
    <location>
        <begin position="114"/>
        <end position="173"/>
    </location>
</feature>
<feature type="domain" description="CBS 2" evidence="2">
    <location>
        <begin position="179"/>
        <end position="237"/>
    </location>
</feature>
<feature type="active site" description="Thioimidate intermediate" evidence="2">
    <location>
        <position position="331"/>
    </location>
</feature>
<feature type="active site" description="Proton acceptor" evidence="2">
    <location>
        <position position="429"/>
    </location>
</feature>
<feature type="binding site" evidence="2">
    <location>
        <begin position="274"/>
        <end position="276"/>
    </location>
    <ligand>
        <name>NAD(+)</name>
        <dbReference type="ChEBI" id="CHEBI:57540"/>
    </ligand>
</feature>
<feature type="binding site" evidence="2">
    <location>
        <begin position="324"/>
        <end position="326"/>
    </location>
    <ligand>
        <name>NAD(+)</name>
        <dbReference type="ChEBI" id="CHEBI:57540"/>
    </ligand>
</feature>
<feature type="binding site" description="in other chain" evidence="2">
    <location>
        <position position="326"/>
    </location>
    <ligand>
        <name>K(+)</name>
        <dbReference type="ChEBI" id="CHEBI:29103"/>
        <note>ligand shared between two tetrameric partners</note>
    </ligand>
</feature>
<feature type="binding site" description="in other chain" evidence="2">
    <location>
        <position position="328"/>
    </location>
    <ligand>
        <name>K(+)</name>
        <dbReference type="ChEBI" id="CHEBI:29103"/>
        <note>ligand shared between two tetrameric partners</note>
    </ligand>
</feature>
<feature type="binding site" evidence="2">
    <location>
        <position position="329"/>
    </location>
    <ligand>
        <name>IMP</name>
        <dbReference type="ChEBI" id="CHEBI:58053"/>
    </ligand>
</feature>
<feature type="binding site" description="in other chain" evidence="2">
    <location>
        <position position="331"/>
    </location>
    <ligand>
        <name>K(+)</name>
        <dbReference type="ChEBI" id="CHEBI:29103"/>
        <note>ligand shared between two tetrameric partners</note>
    </ligand>
</feature>
<feature type="binding site" evidence="2">
    <location>
        <begin position="364"/>
        <end position="366"/>
    </location>
    <ligand>
        <name>IMP</name>
        <dbReference type="ChEBI" id="CHEBI:58053"/>
    </ligand>
</feature>
<feature type="binding site" evidence="2">
    <location>
        <begin position="387"/>
        <end position="388"/>
    </location>
    <ligand>
        <name>IMP</name>
        <dbReference type="ChEBI" id="CHEBI:58053"/>
    </ligand>
</feature>
<feature type="binding site" evidence="2">
    <location>
        <begin position="411"/>
        <end position="415"/>
    </location>
    <ligand>
        <name>IMP</name>
        <dbReference type="ChEBI" id="CHEBI:58053"/>
    </ligand>
</feature>
<feature type="binding site" evidence="2">
    <location>
        <position position="441"/>
    </location>
    <ligand>
        <name>IMP</name>
        <dbReference type="ChEBI" id="CHEBI:58053"/>
    </ligand>
</feature>
<feature type="binding site" evidence="2">
    <location>
        <position position="500"/>
    </location>
    <ligand>
        <name>K(+)</name>
        <dbReference type="ChEBI" id="CHEBI:29103"/>
        <note>ligand shared between two tetrameric partners</note>
    </ligand>
</feature>
<feature type="binding site" evidence="2">
    <location>
        <position position="501"/>
    </location>
    <ligand>
        <name>K(+)</name>
        <dbReference type="ChEBI" id="CHEBI:29103"/>
        <note>ligand shared between two tetrameric partners</note>
    </ligand>
</feature>
<feature type="binding site" evidence="2">
    <location>
        <position position="502"/>
    </location>
    <ligand>
        <name>K(+)</name>
        <dbReference type="ChEBI" id="CHEBI:29103"/>
        <note>ligand shared between two tetrameric partners</note>
    </ligand>
</feature>
<accession>B0UXP9</accession>
<gene>
    <name type="primary">impdh2</name>
    <name type="ORF">si:dkey-90l2.2</name>
</gene>
<proteinExistence type="inferred from homology"/>
<evidence type="ECO:0000250" key="1">
    <source>
        <dbReference type="UniProtKB" id="P12268"/>
    </source>
</evidence>
<evidence type="ECO:0000255" key="2">
    <source>
        <dbReference type="HAMAP-Rule" id="MF_03156"/>
    </source>
</evidence>
<sequence length="514" mass="55696">MADYLISGQTGYVPDDGLTGQQLFNSGDGLTYNDFLILPGYIDFTADQVDLTSALTKQITMKTPLISSPMDTVTESGMAIAMALTGGIGFIHHNCTPEFQANEVRKVKRYEQGFITDPVVMSPNERVRDVFQAKARHGFCGIPITDNGQMGGRLVGIISSRDIDFLKESEHDLPLSEVMTKREDLVVAPAGVTLKEANEILQRSKKGKLPIVNEEGCLVAIIARTDLKKNRDFPLASKDSRKQLLCGAAIGTHNDDKYRLDLLAQAGVDVVVLDSSQGNSIFQINMIKYIKEKYPNVQVIGGNVVTAAQAKNLIDAGADALRVGMGSGSICITQEVLACGRPQATAVYKVSEYARRFGVPVIADGGIQTVGHIAKALALGASTVMMGSLLAATSEAPGEYFFSDGIRLKKYRGMGSLDAMDKNLGSQTRYFSESDKIKVAQGVSGAVQDKGSIHKFVPYLLVGIQHSCQDIGAKSLTQLRAMMYSGELRFEKRTMSAQMEGGVHSLHSYEKRLF</sequence>
<name>IMDH2_DANRE</name>
<comment type="function">
    <text evidence="1">Catalyzes the conversion of inosine 5'-phosphate (IMP) to xanthosine 5'-phosphate (XMP), the first committed and rate-limiting step in the de novo synthesis of guanine nucleotides, and therefore plays an important role in the regulation of cell growth.</text>
</comment>
<comment type="catalytic activity">
    <reaction evidence="1">
        <text>IMP + NAD(+) + H2O = XMP + NADH + H(+)</text>
        <dbReference type="Rhea" id="RHEA:11708"/>
        <dbReference type="ChEBI" id="CHEBI:15377"/>
        <dbReference type="ChEBI" id="CHEBI:15378"/>
        <dbReference type="ChEBI" id="CHEBI:57464"/>
        <dbReference type="ChEBI" id="CHEBI:57540"/>
        <dbReference type="ChEBI" id="CHEBI:57945"/>
        <dbReference type="ChEBI" id="CHEBI:58053"/>
        <dbReference type="EC" id="1.1.1.205"/>
    </reaction>
</comment>
<comment type="cofactor">
    <cofactor evidence="2">
        <name>K(+)</name>
        <dbReference type="ChEBI" id="CHEBI:29103"/>
    </cofactor>
</comment>
<comment type="activity regulation">
    <text evidence="2">Mycophenolic acid (MPA) is a non-competitive inhibitor that prevents formation of the closed enzyme conformation by binding to the same site as the amobile flap. In contrast, mizoribine monophosphate (MZP) is a competitive inhibitor that induces the closed conformation. MPA is a potent inhibitor of mammalian IMPDHs but a poor inhibitor of the bacterial enzymes. MZP is a more potent inhibitor of bacterial IMPDH.</text>
</comment>
<comment type="pathway">
    <text evidence="1">Purine metabolism; XMP biosynthesis via de novo pathway; XMP from IMP: step 1/1.</text>
</comment>
<comment type="subunit">
    <text evidence="1">Homotetramer.</text>
</comment>
<comment type="subcellular location">
    <subcellularLocation>
        <location evidence="1">Cytoplasm</location>
    </subcellularLocation>
    <subcellularLocation>
        <location evidence="1">Nucleus</location>
    </subcellularLocation>
    <subcellularLocation>
        <location evidence="1">Cytoplasm</location>
        <location evidence="1">Cytosol</location>
    </subcellularLocation>
    <text evidence="1">Can form fiber-like subcellular structures termed 'cytoophidia' in response to intracellular guanine-nucleotide depletion.</text>
</comment>
<comment type="similarity">
    <text evidence="2">Belongs to the IMPDH/GMPR family.</text>
</comment>
<protein>
    <recommendedName>
        <fullName evidence="2">Inosine-5'-monophosphate dehydrogenase 2</fullName>
        <shortName evidence="2">IMP dehydrogenase 2</shortName>
        <shortName evidence="2">IMPD 2</shortName>
        <shortName evidence="2">IMPDH 2</shortName>
        <ecNumber evidence="1">1.1.1.205</ecNumber>
    </recommendedName>
</protein>
<keyword id="KW-0129">CBS domain</keyword>
<keyword id="KW-0963">Cytoplasm</keyword>
<keyword id="KW-0332">GMP biosynthesis</keyword>
<keyword id="KW-0479">Metal-binding</keyword>
<keyword id="KW-0520">NAD</keyword>
<keyword id="KW-0539">Nucleus</keyword>
<keyword id="KW-0560">Oxidoreductase</keyword>
<keyword id="KW-0630">Potassium</keyword>
<keyword id="KW-0658">Purine biosynthesis</keyword>
<keyword id="KW-1185">Reference proteome</keyword>
<keyword id="KW-0677">Repeat</keyword>